<feature type="chain" id="PRO_0000416616" description="Uncharacterized protein C11D3.19">
    <location>
        <begin position="1"/>
        <end position="77"/>
    </location>
</feature>
<feature type="transmembrane region" description="Helical" evidence="1">
    <location>
        <begin position="57"/>
        <end position="76"/>
    </location>
</feature>
<name>YAOJ_SCHPO</name>
<sequence>MVPYTETSICLTNVPCGYMNVSGCFKGADALTILHECDEANVYTATFWSTSSGTRRNSAVICTLIANLMAFFMLLTM</sequence>
<proteinExistence type="predicted"/>
<keyword id="KW-0472">Membrane</keyword>
<keyword id="KW-1185">Reference proteome</keyword>
<keyword id="KW-0812">Transmembrane</keyword>
<keyword id="KW-1133">Transmembrane helix</keyword>
<protein>
    <recommendedName>
        <fullName>Uncharacterized protein C11D3.19</fullName>
    </recommendedName>
</protein>
<accession>G2TRM3</accession>
<evidence type="ECO:0000255" key="1"/>
<evidence type="ECO:0000305" key="2"/>
<comment type="subcellular location">
    <subcellularLocation>
        <location evidence="2">Membrane</location>
        <topology evidence="2">Single-pass membrane protein</topology>
    </subcellularLocation>
</comment>
<dbReference type="EMBL" id="CU329670">
    <property type="protein sequence ID" value="CCD31309.1"/>
    <property type="molecule type" value="Genomic_DNA"/>
</dbReference>
<dbReference type="RefSeq" id="XP_004001762.1">
    <property type="nucleotide sequence ID" value="XM_004001713.1"/>
</dbReference>
<dbReference type="PaxDb" id="4896-SPAC11D3.19.1"/>
<dbReference type="EnsemblFungi" id="SPAC11D3.19.1">
    <property type="protein sequence ID" value="SPAC11D3.19.1:pep"/>
    <property type="gene ID" value="SPAC11D3.19"/>
</dbReference>
<dbReference type="PomBase" id="SPAC11D3.19"/>
<dbReference type="VEuPathDB" id="FungiDB:SPAC11D3.19"/>
<dbReference type="HOGENOM" id="CLU_2639491_0_0_1"/>
<dbReference type="InParanoid" id="G2TRM3"/>
<dbReference type="PRO" id="PR:G2TRM3"/>
<dbReference type="Proteomes" id="UP000002485">
    <property type="component" value="Chromosome I"/>
</dbReference>
<dbReference type="GO" id="GO:0016020">
    <property type="term" value="C:membrane"/>
    <property type="evidence" value="ECO:0007669"/>
    <property type="project" value="UniProtKB-SubCell"/>
</dbReference>
<organism>
    <name type="scientific">Schizosaccharomyces pombe (strain 972 / ATCC 24843)</name>
    <name type="common">Fission yeast</name>
    <dbReference type="NCBI Taxonomy" id="284812"/>
    <lineage>
        <taxon>Eukaryota</taxon>
        <taxon>Fungi</taxon>
        <taxon>Dikarya</taxon>
        <taxon>Ascomycota</taxon>
        <taxon>Taphrinomycotina</taxon>
        <taxon>Schizosaccharomycetes</taxon>
        <taxon>Schizosaccharomycetales</taxon>
        <taxon>Schizosaccharomycetaceae</taxon>
        <taxon>Schizosaccharomyces</taxon>
    </lineage>
</organism>
<gene>
    <name type="ORF">SPAC11D3.19</name>
</gene>
<reference key="1">
    <citation type="journal article" date="2002" name="Nature">
        <title>The genome sequence of Schizosaccharomyces pombe.</title>
        <authorList>
            <person name="Wood V."/>
            <person name="Gwilliam R."/>
            <person name="Rajandream M.A."/>
            <person name="Lyne M.H."/>
            <person name="Lyne R."/>
            <person name="Stewart A."/>
            <person name="Sgouros J.G."/>
            <person name="Peat N."/>
            <person name="Hayles J."/>
            <person name="Baker S.G."/>
            <person name="Basham D."/>
            <person name="Bowman S."/>
            <person name="Brooks K."/>
            <person name="Brown D."/>
            <person name="Brown S."/>
            <person name="Chillingworth T."/>
            <person name="Churcher C.M."/>
            <person name="Collins M."/>
            <person name="Connor R."/>
            <person name="Cronin A."/>
            <person name="Davis P."/>
            <person name="Feltwell T."/>
            <person name="Fraser A."/>
            <person name="Gentles S."/>
            <person name="Goble A."/>
            <person name="Hamlin N."/>
            <person name="Harris D.E."/>
            <person name="Hidalgo J."/>
            <person name="Hodgson G."/>
            <person name="Holroyd S."/>
            <person name="Hornsby T."/>
            <person name="Howarth S."/>
            <person name="Huckle E.J."/>
            <person name="Hunt S."/>
            <person name="Jagels K."/>
            <person name="James K.D."/>
            <person name="Jones L."/>
            <person name="Jones M."/>
            <person name="Leather S."/>
            <person name="McDonald S."/>
            <person name="McLean J."/>
            <person name="Mooney P."/>
            <person name="Moule S."/>
            <person name="Mungall K.L."/>
            <person name="Murphy L.D."/>
            <person name="Niblett D."/>
            <person name="Odell C."/>
            <person name="Oliver K."/>
            <person name="O'Neil S."/>
            <person name="Pearson D."/>
            <person name="Quail M.A."/>
            <person name="Rabbinowitsch E."/>
            <person name="Rutherford K.M."/>
            <person name="Rutter S."/>
            <person name="Saunders D."/>
            <person name="Seeger K."/>
            <person name="Sharp S."/>
            <person name="Skelton J."/>
            <person name="Simmonds M.N."/>
            <person name="Squares R."/>
            <person name="Squares S."/>
            <person name="Stevens K."/>
            <person name="Taylor K."/>
            <person name="Taylor R.G."/>
            <person name="Tivey A."/>
            <person name="Walsh S.V."/>
            <person name="Warren T."/>
            <person name="Whitehead S."/>
            <person name="Woodward J.R."/>
            <person name="Volckaert G."/>
            <person name="Aert R."/>
            <person name="Robben J."/>
            <person name="Grymonprez B."/>
            <person name="Weltjens I."/>
            <person name="Vanstreels E."/>
            <person name="Rieger M."/>
            <person name="Schaefer M."/>
            <person name="Mueller-Auer S."/>
            <person name="Gabel C."/>
            <person name="Fuchs M."/>
            <person name="Duesterhoeft A."/>
            <person name="Fritzc C."/>
            <person name="Holzer E."/>
            <person name="Moestl D."/>
            <person name="Hilbert H."/>
            <person name="Borzym K."/>
            <person name="Langer I."/>
            <person name="Beck A."/>
            <person name="Lehrach H."/>
            <person name="Reinhardt R."/>
            <person name="Pohl T.M."/>
            <person name="Eger P."/>
            <person name="Zimmermann W."/>
            <person name="Wedler H."/>
            <person name="Wambutt R."/>
            <person name="Purnelle B."/>
            <person name="Goffeau A."/>
            <person name="Cadieu E."/>
            <person name="Dreano S."/>
            <person name="Gloux S."/>
            <person name="Lelaure V."/>
            <person name="Mottier S."/>
            <person name="Galibert F."/>
            <person name="Aves S.J."/>
            <person name="Xiang Z."/>
            <person name="Hunt C."/>
            <person name="Moore K."/>
            <person name="Hurst S.M."/>
            <person name="Lucas M."/>
            <person name="Rochet M."/>
            <person name="Gaillardin C."/>
            <person name="Tallada V.A."/>
            <person name="Garzon A."/>
            <person name="Thode G."/>
            <person name="Daga R.R."/>
            <person name="Cruzado L."/>
            <person name="Jimenez J."/>
            <person name="Sanchez M."/>
            <person name="del Rey F."/>
            <person name="Benito J."/>
            <person name="Dominguez A."/>
            <person name="Revuelta J.L."/>
            <person name="Moreno S."/>
            <person name="Armstrong J."/>
            <person name="Forsburg S.L."/>
            <person name="Cerutti L."/>
            <person name="Lowe T."/>
            <person name="McCombie W.R."/>
            <person name="Paulsen I."/>
            <person name="Potashkin J."/>
            <person name="Shpakovski G.V."/>
            <person name="Ussery D."/>
            <person name="Barrell B.G."/>
            <person name="Nurse P."/>
        </authorList>
    </citation>
    <scope>NUCLEOTIDE SEQUENCE [LARGE SCALE GENOMIC DNA]</scope>
    <source>
        <strain>972 / ATCC 24843</strain>
    </source>
</reference>
<reference key="2">
    <citation type="journal article" date="2011" name="Science">
        <title>Comparative functional genomics of the fission yeasts.</title>
        <authorList>
            <person name="Rhind N."/>
            <person name="Chen Z."/>
            <person name="Yassour M."/>
            <person name="Thompson D.A."/>
            <person name="Haas B.J."/>
            <person name="Habib N."/>
            <person name="Wapinski I."/>
            <person name="Roy S."/>
            <person name="Lin M.F."/>
            <person name="Heiman D.I."/>
            <person name="Young S.K."/>
            <person name="Furuya K."/>
            <person name="Guo Y."/>
            <person name="Pidoux A."/>
            <person name="Chen H.M."/>
            <person name="Robbertse B."/>
            <person name="Goldberg J.M."/>
            <person name="Aoki K."/>
            <person name="Bayne E.H."/>
            <person name="Berlin A.M."/>
            <person name="Desjardins C.A."/>
            <person name="Dobbs E."/>
            <person name="Dukaj L."/>
            <person name="Fan L."/>
            <person name="FitzGerald M.G."/>
            <person name="French C."/>
            <person name="Gujja S."/>
            <person name="Hansen K."/>
            <person name="Keifenheim D."/>
            <person name="Levin J.Z."/>
            <person name="Mosher R.A."/>
            <person name="Mueller C.A."/>
            <person name="Pfiffner J."/>
            <person name="Priest M."/>
            <person name="Russ C."/>
            <person name="Smialowska A."/>
            <person name="Swoboda P."/>
            <person name="Sykes S.M."/>
            <person name="Vaughn M."/>
            <person name="Vengrova S."/>
            <person name="Yoder R."/>
            <person name="Zeng Q."/>
            <person name="Allshire R."/>
            <person name="Baulcombe D."/>
            <person name="Birren B.W."/>
            <person name="Brown W."/>
            <person name="Ekwall K."/>
            <person name="Kellis M."/>
            <person name="Leatherwood J."/>
            <person name="Levin H."/>
            <person name="Margalit H."/>
            <person name="Martienssen R."/>
            <person name="Nieduszynski C.A."/>
            <person name="Spatafora J.W."/>
            <person name="Friedman N."/>
            <person name="Dalgaard J.Z."/>
            <person name="Baumann P."/>
            <person name="Niki H."/>
            <person name="Regev A."/>
            <person name="Nusbaum C."/>
        </authorList>
    </citation>
    <scope>IDENTIFICATION</scope>
</reference>